<sequence length="1188" mass="132855">MAGHEVRYGKHRTRRSFSRIKEVLDLPNLIEIQTDSFQDFLDSGLKEVFEDVLPISNFTDTMELEFVGYEFKEPKYTLEEARIHDASYSAPIFVTFRLVNKETGEIKTQEVFFGDFPIMTEMGTFIINGGERIIVSQLVRSPGVYFNDKVDKNGKVGYGSTVIPNRGAWLELETDSKDIAYTRIDRTRKIPFTTLVRALGFSGDDEIVDIFGESDLVRNTIEKDIHKNPSDSRTDEALKEIYERLRPGEPKTADSSRSLLIARFFDARRYDLAAVGRYKVNKKLNIKTRLLNQIIAENLVDAETGEILVEAGTEMTRSVIESIEEHLDGDLNKFVYTPNDYAVVTEPVVLQKFKVVSPIDPDRVVTIVGNANPDDKVRALTPADILAEMSYFLNLAEGLGKVDDIDHLGNRRIRAVGELLANQFRIGLARMERNVRERMSVQDNDVLTPQQIINIRPVTAAVKEFFGSSQLSQFMDQHNPLSELSHKRRLSALGPGGLTRDRAGYEVRDVHYTHYGRMCPIETPEGPNIGLINNLSSFGHLNKYGFIQTPYRKVDRATGRVTNEIVWLTADEEDEYTVAQANSKLNEDGTFAEEIVMGRHQGNNQEFSASVVDFVDVSPKQVVAVATACIPFLENDDSNRALMGANMQRQAVPLIDPKAPYVGTGMEYQAAHDSGAAVIAQHNGKVVFSDAEKVEIRRQDGSLDVYHITKFRRSNSGTAYNQRTLVKVGDIVEKGDFIADGPSMENGEMALGQNPVVAYMTWEGYNFEDAVIMSERLVKEDVYTSVHLEEFESETRDTKLGPEEITREIPNVGEEALKDLDEMGIIRIGAEVKEGDILVGKVTPKGEKDLSAEERLLHAIFGDKSREVRDTSLRVPHGGDGIVRDVKIFTRANGDELQSGVNMLVRVYIAQKRKIKVGDKMAGRHGNKGVVSRIVPVEDMPYLPDGTPVDIMLNPLGVPSRMNIGQVMELHLGMAARNLGIHIATPVFDGASSEDLWDTVREAGMDSDAKTVLYDGRTGEPFDNRVSVGVMYMIKLHHMVDDKLHARSVGPYSLVTQQPLGGKAQFGGQRFGEMEVWALEAYGASNVLQEILTYKSDDVTGRLKAYEAITKGKPIPKPGVPESFRVLVKELQSLGLDMRVLDEDDNEVELRDLDEGEDDDIMHVDDLEKAREKQAQETQEVSETTDEK</sequence>
<keyword id="KW-0240">DNA-directed RNA polymerase</keyword>
<keyword id="KW-0548">Nucleotidyltransferase</keyword>
<keyword id="KW-0804">Transcription</keyword>
<keyword id="KW-0808">Transferase</keyword>
<gene>
    <name evidence="1" type="primary">rpoB</name>
    <name type="ordered locus">SpyM3_0075</name>
</gene>
<dbReference type="EC" id="2.7.7.6" evidence="1"/>
<dbReference type="EMBL" id="AE014074">
    <property type="protein sequence ID" value="AAM78682.1"/>
    <property type="molecule type" value="Genomic_DNA"/>
</dbReference>
<dbReference type="RefSeq" id="WP_002986567.1">
    <property type="nucleotide sequence ID" value="NC_004070.1"/>
</dbReference>
<dbReference type="SMR" id="P0DF30"/>
<dbReference type="KEGG" id="spg:SpyM3_0075"/>
<dbReference type="HOGENOM" id="CLU_000524_4_1_9"/>
<dbReference type="Proteomes" id="UP000000564">
    <property type="component" value="Chromosome"/>
</dbReference>
<dbReference type="GO" id="GO:0000428">
    <property type="term" value="C:DNA-directed RNA polymerase complex"/>
    <property type="evidence" value="ECO:0007669"/>
    <property type="project" value="UniProtKB-KW"/>
</dbReference>
<dbReference type="GO" id="GO:0003677">
    <property type="term" value="F:DNA binding"/>
    <property type="evidence" value="ECO:0007669"/>
    <property type="project" value="UniProtKB-UniRule"/>
</dbReference>
<dbReference type="GO" id="GO:0003899">
    <property type="term" value="F:DNA-directed RNA polymerase activity"/>
    <property type="evidence" value="ECO:0007669"/>
    <property type="project" value="UniProtKB-UniRule"/>
</dbReference>
<dbReference type="GO" id="GO:0032549">
    <property type="term" value="F:ribonucleoside binding"/>
    <property type="evidence" value="ECO:0007669"/>
    <property type="project" value="InterPro"/>
</dbReference>
<dbReference type="GO" id="GO:0006351">
    <property type="term" value="P:DNA-templated transcription"/>
    <property type="evidence" value="ECO:0007669"/>
    <property type="project" value="UniProtKB-UniRule"/>
</dbReference>
<dbReference type="CDD" id="cd00653">
    <property type="entry name" value="RNA_pol_B_RPB2"/>
    <property type="match status" value="1"/>
</dbReference>
<dbReference type="Gene3D" id="2.40.50.100">
    <property type="match status" value="1"/>
</dbReference>
<dbReference type="Gene3D" id="2.40.50.150">
    <property type="match status" value="1"/>
</dbReference>
<dbReference type="Gene3D" id="3.90.1100.10">
    <property type="match status" value="2"/>
</dbReference>
<dbReference type="Gene3D" id="2.30.150.10">
    <property type="entry name" value="DNA-directed RNA polymerase, beta subunit, external 1 domain"/>
    <property type="match status" value="1"/>
</dbReference>
<dbReference type="Gene3D" id="2.40.270.10">
    <property type="entry name" value="DNA-directed RNA polymerase, subunit 2, domain 6"/>
    <property type="match status" value="1"/>
</dbReference>
<dbReference type="Gene3D" id="3.90.1800.10">
    <property type="entry name" value="RNA polymerase alpha subunit dimerisation domain"/>
    <property type="match status" value="1"/>
</dbReference>
<dbReference type="Gene3D" id="3.90.1110.10">
    <property type="entry name" value="RNA polymerase Rpb2, domain 2"/>
    <property type="match status" value="1"/>
</dbReference>
<dbReference type="HAMAP" id="MF_01321">
    <property type="entry name" value="RNApol_bact_RpoB"/>
    <property type="match status" value="1"/>
</dbReference>
<dbReference type="InterPro" id="IPR042107">
    <property type="entry name" value="DNA-dir_RNA_pol_bsu_ext_1_sf"/>
</dbReference>
<dbReference type="InterPro" id="IPR019462">
    <property type="entry name" value="DNA-dir_RNA_pol_bsu_external_1"/>
</dbReference>
<dbReference type="InterPro" id="IPR015712">
    <property type="entry name" value="DNA-dir_RNA_pol_su2"/>
</dbReference>
<dbReference type="InterPro" id="IPR007120">
    <property type="entry name" value="DNA-dir_RNAP_su2_dom"/>
</dbReference>
<dbReference type="InterPro" id="IPR037033">
    <property type="entry name" value="DNA-dir_RNAP_su2_hyb_sf"/>
</dbReference>
<dbReference type="InterPro" id="IPR010243">
    <property type="entry name" value="RNA_pol_bsu_bac"/>
</dbReference>
<dbReference type="InterPro" id="IPR007121">
    <property type="entry name" value="RNA_pol_bsu_CS"/>
</dbReference>
<dbReference type="InterPro" id="IPR007644">
    <property type="entry name" value="RNA_pol_bsu_protrusion"/>
</dbReference>
<dbReference type="InterPro" id="IPR007642">
    <property type="entry name" value="RNA_pol_Rpb2_2"/>
</dbReference>
<dbReference type="InterPro" id="IPR037034">
    <property type="entry name" value="RNA_pol_Rpb2_2_sf"/>
</dbReference>
<dbReference type="InterPro" id="IPR007645">
    <property type="entry name" value="RNA_pol_Rpb2_3"/>
</dbReference>
<dbReference type="InterPro" id="IPR007641">
    <property type="entry name" value="RNA_pol_Rpb2_7"/>
</dbReference>
<dbReference type="InterPro" id="IPR014724">
    <property type="entry name" value="RNA_pol_RPB2_OB-fold"/>
</dbReference>
<dbReference type="NCBIfam" id="NF001616">
    <property type="entry name" value="PRK00405.1"/>
    <property type="match status" value="1"/>
</dbReference>
<dbReference type="NCBIfam" id="TIGR02013">
    <property type="entry name" value="rpoB"/>
    <property type="match status" value="1"/>
</dbReference>
<dbReference type="PANTHER" id="PTHR20856">
    <property type="entry name" value="DNA-DIRECTED RNA POLYMERASE I SUBUNIT 2"/>
    <property type="match status" value="1"/>
</dbReference>
<dbReference type="Pfam" id="PF04563">
    <property type="entry name" value="RNA_pol_Rpb2_1"/>
    <property type="match status" value="1"/>
</dbReference>
<dbReference type="Pfam" id="PF04561">
    <property type="entry name" value="RNA_pol_Rpb2_2"/>
    <property type="match status" value="2"/>
</dbReference>
<dbReference type="Pfam" id="PF04565">
    <property type="entry name" value="RNA_pol_Rpb2_3"/>
    <property type="match status" value="1"/>
</dbReference>
<dbReference type="Pfam" id="PF10385">
    <property type="entry name" value="RNA_pol_Rpb2_45"/>
    <property type="match status" value="1"/>
</dbReference>
<dbReference type="Pfam" id="PF00562">
    <property type="entry name" value="RNA_pol_Rpb2_6"/>
    <property type="match status" value="1"/>
</dbReference>
<dbReference type="Pfam" id="PF04560">
    <property type="entry name" value="RNA_pol_Rpb2_7"/>
    <property type="match status" value="1"/>
</dbReference>
<dbReference type="SUPFAM" id="SSF64484">
    <property type="entry name" value="beta and beta-prime subunits of DNA dependent RNA-polymerase"/>
    <property type="match status" value="1"/>
</dbReference>
<dbReference type="PROSITE" id="PS01166">
    <property type="entry name" value="RNA_POL_BETA"/>
    <property type="match status" value="1"/>
</dbReference>
<name>RPOB_STRP3</name>
<comment type="function">
    <text evidence="1">DNA-dependent RNA polymerase catalyzes the transcription of DNA into RNA using the four ribonucleoside triphosphates as substrates.</text>
</comment>
<comment type="catalytic activity">
    <reaction evidence="1">
        <text>RNA(n) + a ribonucleoside 5'-triphosphate = RNA(n+1) + diphosphate</text>
        <dbReference type="Rhea" id="RHEA:21248"/>
        <dbReference type="Rhea" id="RHEA-COMP:14527"/>
        <dbReference type="Rhea" id="RHEA-COMP:17342"/>
        <dbReference type="ChEBI" id="CHEBI:33019"/>
        <dbReference type="ChEBI" id="CHEBI:61557"/>
        <dbReference type="ChEBI" id="CHEBI:140395"/>
        <dbReference type="EC" id="2.7.7.6"/>
    </reaction>
</comment>
<comment type="subunit">
    <text evidence="1">The RNAP catalytic core consists of 2 alpha, 1 beta, 1 beta' and 1 omega subunit. When a sigma factor is associated with the core the holoenzyme is formed, which can initiate transcription.</text>
</comment>
<comment type="similarity">
    <text evidence="1">Belongs to the RNA polymerase beta chain family.</text>
</comment>
<protein>
    <recommendedName>
        <fullName evidence="1">DNA-directed RNA polymerase subunit beta</fullName>
        <shortName evidence="1">RNAP subunit beta</shortName>
        <ecNumber evidence="1">2.7.7.6</ecNumber>
    </recommendedName>
    <alternativeName>
        <fullName evidence="1">RNA polymerase subunit beta</fullName>
    </alternativeName>
    <alternativeName>
        <fullName evidence="1">Transcriptase subunit beta</fullName>
    </alternativeName>
</protein>
<feature type="chain" id="PRO_0000047977" description="DNA-directed RNA polymerase subunit beta">
    <location>
        <begin position="1"/>
        <end position="1188"/>
    </location>
</feature>
<organism>
    <name type="scientific">Streptococcus pyogenes serotype M3 (strain ATCC BAA-595 / MGAS315)</name>
    <dbReference type="NCBI Taxonomy" id="198466"/>
    <lineage>
        <taxon>Bacteria</taxon>
        <taxon>Bacillati</taxon>
        <taxon>Bacillota</taxon>
        <taxon>Bacilli</taxon>
        <taxon>Lactobacillales</taxon>
        <taxon>Streptococcaceae</taxon>
        <taxon>Streptococcus</taxon>
    </lineage>
</organism>
<reference key="1">
    <citation type="journal article" date="2002" name="Proc. Natl. Acad. Sci. U.S.A.">
        <title>Genome sequence of a serotype M3 strain of group A Streptococcus: phage-encoded toxins, the high-virulence phenotype, and clone emergence.</title>
        <authorList>
            <person name="Beres S.B."/>
            <person name="Sylva G.L."/>
            <person name="Barbian K.D."/>
            <person name="Lei B."/>
            <person name="Hoff J.S."/>
            <person name="Mammarella N.D."/>
            <person name="Liu M.-Y."/>
            <person name="Smoot J.C."/>
            <person name="Porcella S.F."/>
            <person name="Parkins L.D."/>
            <person name="Campbell D.S."/>
            <person name="Smith T.M."/>
            <person name="McCormick J.K."/>
            <person name="Leung D.Y.M."/>
            <person name="Schlievert P.M."/>
            <person name="Musser J.M."/>
        </authorList>
    </citation>
    <scope>NUCLEOTIDE SEQUENCE [LARGE SCALE GENOMIC DNA]</scope>
    <source>
        <strain>ATCC BAA-595 / MGAS315</strain>
    </source>
</reference>
<evidence type="ECO:0000255" key="1">
    <source>
        <dbReference type="HAMAP-Rule" id="MF_01321"/>
    </source>
</evidence>
<accession>P0DF30</accession>
<accession>Q8K8W3</accession>
<proteinExistence type="inferred from homology"/>